<gene>
    <name evidence="1" type="primary">murC</name>
    <name type="ordered locus">LMOf2365_1627</name>
</gene>
<proteinExistence type="inferred from homology"/>
<reference key="1">
    <citation type="journal article" date="2004" name="Nucleic Acids Res.">
        <title>Whole genome comparisons of serotype 4b and 1/2a strains of the food-borne pathogen Listeria monocytogenes reveal new insights into the core genome components of this species.</title>
        <authorList>
            <person name="Nelson K.E."/>
            <person name="Fouts D.E."/>
            <person name="Mongodin E.F."/>
            <person name="Ravel J."/>
            <person name="DeBoy R.T."/>
            <person name="Kolonay J.F."/>
            <person name="Rasko D.A."/>
            <person name="Angiuoli S.V."/>
            <person name="Gill S.R."/>
            <person name="Paulsen I.T."/>
            <person name="Peterson J.D."/>
            <person name="White O."/>
            <person name="Nelson W.C."/>
            <person name="Nierman W.C."/>
            <person name="Beanan M.J."/>
            <person name="Brinkac L.M."/>
            <person name="Daugherty S.C."/>
            <person name="Dodson R.J."/>
            <person name="Durkin A.S."/>
            <person name="Madupu R."/>
            <person name="Haft D.H."/>
            <person name="Selengut J."/>
            <person name="Van Aken S.E."/>
            <person name="Khouri H.M."/>
            <person name="Fedorova N."/>
            <person name="Forberger H.A."/>
            <person name="Tran B."/>
            <person name="Kathariou S."/>
            <person name="Wonderling L.D."/>
            <person name="Uhlich G.A."/>
            <person name="Bayles D.O."/>
            <person name="Luchansky J.B."/>
            <person name="Fraser C.M."/>
        </authorList>
    </citation>
    <scope>NUCLEOTIDE SEQUENCE [LARGE SCALE GENOMIC DNA]</scope>
    <source>
        <strain>F2365</strain>
    </source>
</reference>
<comment type="function">
    <text evidence="1">Cell wall formation.</text>
</comment>
<comment type="catalytic activity">
    <reaction evidence="1">
        <text>UDP-N-acetyl-alpha-D-muramate + L-alanine + ATP = UDP-N-acetyl-alpha-D-muramoyl-L-alanine + ADP + phosphate + H(+)</text>
        <dbReference type="Rhea" id="RHEA:23372"/>
        <dbReference type="ChEBI" id="CHEBI:15378"/>
        <dbReference type="ChEBI" id="CHEBI:30616"/>
        <dbReference type="ChEBI" id="CHEBI:43474"/>
        <dbReference type="ChEBI" id="CHEBI:57972"/>
        <dbReference type="ChEBI" id="CHEBI:70757"/>
        <dbReference type="ChEBI" id="CHEBI:83898"/>
        <dbReference type="ChEBI" id="CHEBI:456216"/>
        <dbReference type="EC" id="6.3.2.8"/>
    </reaction>
</comment>
<comment type="pathway">
    <text evidence="1">Cell wall biogenesis; peptidoglycan biosynthesis.</text>
</comment>
<comment type="subcellular location">
    <subcellularLocation>
        <location evidence="1">Cytoplasm</location>
    </subcellularLocation>
</comment>
<comment type="similarity">
    <text evidence="1">Belongs to the MurCDEF family.</text>
</comment>
<evidence type="ECO:0000255" key="1">
    <source>
        <dbReference type="HAMAP-Rule" id="MF_00046"/>
    </source>
</evidence>
<sequence>MTIYHFVGIKGSGMSALAQILHDKGFQVQGSDVDKYFFTQKALEEKQIPIMTFSADNIQEGLTIIAGNAFPDTHEEIERALELGLPVIRYHKFLGQLIDGYTSIAITGSHGKTSTTGLLSHVVGAIRPTSYLIGDGTGSGTKGAEYFALEACEYQRHFLAYKPTYAIMTNIDWDHPDYFKSVDDVFNAFETLGKQVKKAVFALGDDAELRKLTLDIPIIYFGFGEENEFQAKNVIKETTGTKFDVYHRGEFLGSFEIPAYGDHNVLNALSVIALCDYEGLPVEDVKKELKTFEGVKRRFSITEKANQVLVDDYAHHPSEIRATVNAARQKYPDKKVVAVFQPHTFTRTRTFLQGFADSLNLADEVYLCDIFGSAREKTGNLTIADLAHKTKGNHIIKEEHTEELLKYPEAVILFMGAGDVQKFQAAYEKVLDHEVLTEADLKKSAIN</sequence>
<dbReference type="EC" id="6.3.2.8" evidence="1"/>
<dbReference type="EMBL" id="AE017262">
    <property type="protein sequence ID" value="AAT04402.1"/>
    <property type="molecule type" value="Genomic_DNA"/>
</dbReference>
<dbReference type="RefSeq" id="WP_003727366.1">
    <property type="nucleotide sequence ID" value="NC_002973.6"/>
</dbReference>
<dbReference type="SMR" id="Q71Z62"/>
<dbReference type="KEGG" id="lmf:LMOf2365_1627"/>
<dbReference type="HOGENOM" id="CLU_028104_1_0_9"/>
<dbReference type="UniPathway" id="UPA00219"/>
<dbReference type="GO" id="GO:0005737">
    <property type="term" value="C:cytoplasm"/>
    <property type="evidence" value="ECO:0007669"/>
    <property type="project" value="UniProtKB-SubCell"/>
</dbReference>
<dbReference type="GO" id="GO:0005524">
    <property type="term" value="F:ATP binding"/>
    <property type="evidence" value="ECO:0007669"/>
    <property type="project" value="UniProtKB-UniRule"/>
</dbReference>
<dbReference type="GO" id="GO:0008763">
    <property type="term" value="F:UDP-N-acetylmuramate-L-alanine ligase activity"/>
    <property type="evidence" value="ECO:0007669"/>
    <property type="project" value="UniProtKB-UniRule"/>
</dbReference>
<dbReference type="GO" id="GO:0051301">
    <property type="term" value="P:cell division"/>
    <property type="evidence" value="ECO:0007669"/>
    <property type="project" value="UniProtKB-KW"/>
</dbReference>
<dbReference type="GO" id="GO:0071555">
    <property type="term" value="P:cell wall organization"/>
    <property type="evidence" value="ECO:0007669"/>
    <property type="project" value="UniProtKB-KW"/>
</dbReference>
<dbReference type="GO" id="GO:0009252">
    <property type="term" value="P:peptidoglycan biosynthetic process"/>
    <property type="evidence" value="ECO:0007669"/>
    <property type="project" value="UniProtKB-UniRule"/>
</dbReference>
<dbReference type="GO" id="GO:0008360">
    <property type="term" value="P:regulation of cell shape"/>
    <property type="evidence" value="ECO:0007669"/>
    <property type="project" value="UniProtKB-KW"/>
</dbReference>
<dbReference type="Gene3D" id="3.90.190.20">
    <property type="entry name" value="Mur ligase, C-terminal domain"/>
    <property type="match status" value="1"/>
</dbReference>
<dbReference type="Gene3D" id="3.40.1190.10">
    <property type="entry name" value="Mur-like, catalytic domain"/>
    <property type="match status" value="1"/>
</dbReference>
<dbReference type="Gene3D" id="3.40.50.720">
    <property type="entry name" value="NAD(P)-binding Rossmann-like Domain"/>
    <property type="match status" value="1"/>
</dbReference>
<dbReference type="HAMAP" id="MF_00046">
    <property type="entry name" value="MurC"/>
    <property type="match status" value="1"/>
</dbReference>
<dbReference type="InterPro" id="IPR036565">
    <property type="entry name" value="Mur-like_cat_sf"/>
</dbReference>
<dbReference type="InterPro" id="IPR004101">
    <property type="entry name" value="Mur_ligase_C"/>
</dbReference>
<dbReference type="InterPro" id="IPR036615">
    <property type="entry name" value="Mur_ligase_C_dom_sf"/>
</dbReference>
<dbReference type="InterPro" id="IPR013221">
    <property type="entry name" value="Mur_ligase_cen"/>
</dbReference>
<dbReference type="InterPro" id="IPR000713">
    <property type="entry name" value="Mur_ligase_N"/>
</dbReference>
<dbReference type="InterPro" id="IPR050061">
    <property type="entry name" value="MurCDEF_pg_biosynth"/>
</dbReference>
<dbReference type="InterPro" id="IPR005758">
    <property type="entry name" value="UDP-N-AcMur_Ala_ligase_MurC"/>
</dbReference>
<dbReference type="NCBIfam" id="TIGR01082">
    <property type="entry name" value="murC"/>
    <property type="match status" value="1"/>
</dbReference>
<dbReference type="PANTHER" id="PTHR43445:SF3">
    <property type="entry name" value="UDP-N-ACETYLMURAMATE--L-ALANINE LIGASE"/>
    <property type="match status" value="1"/>
</dbReference>
<dbReference type="PANTHER" id="PTHR43445">
    <property type="entry name" value="UDP-N-ACETYLMURAMATE--L-ALANINE LIGASE-RELATED"/>
    <property type="match status" value="1"/>
</dbReference>
<dbReference type="Pfam" id="PF01225">
    <property type="entry name" value="Mur_ligase"/>
    <property type="match status" value="1"/>
</dbReference>
<dbReference type="Pfam" id="PF02875">
    <property type="entry name" value="Mur_ligase_C"/>
    <property type="match status" value="1"/>
</dbReference>
<dbReference type="Pfam" id="PF08245">
    <property type="entry name" value="Mur_ligase_M"/>
    <property type="match status" value="1"/>
</dbReference>
<dbReference type="SUPFAM" id="SSF51984">
    <property type="entry name" value="MurCD N-terminal domain"/>
    <property type="match status" value="1"/>
</dbReference>
<dbReference type="SUPFAM" id="SSF53623">
    <property type="entry name" value="MurD-like peptide ligases, catalytic domain"/>
    <property type="match status" value="1"/>
</dbReference>
<dbReference type="SUPFAM" id="SSF53244">
    <property type="entry name" value="MurD-like peptide ligases, peptide-binding domain"/>
    <property type="match status" value="1"/>
</dbReference>
<accession>Q71Z62</accession>
<protein>
    <recommendedName>
        <fullName evidence="1">UDP-N-acetylmuramate--L-alanine ligase</fullName>
        <ecNumber evidence="1">6.3.2.8</ecNumber>
    </recommendedName>
    <alternativeName>
        <fullName evidence="1">UDP-N-acetylmuramoyl-L-alanine synthetase</fullName>
    </alternativeName>
</protein>
<keyword id="KW-0067">ATP-binding</keyword>
<keyword id="KW-0131">Cell cycle</keyword>
<keyword id="KW-0132">Cell division</keyword>
<keyword id="KW-0133">Cell shape</keyword>
<keyword id="KW-0961">Cell wall biogenesis/degradation</keyword>
<keyword id="KW-0963">Cytoplasm</keyword>
<keyword id="KW-0436">Ligase</keyword>
<keyword id="KW-0547">Nucleotide-binding</keyword>
<keyword id="KW-0573">Peptidoglycan synthesis</keyword>
<name>MURC_LISMF</name>
<feature type="chain" id="PRO_0000182113" description="UDP-N-acetylmuramate--L-alanine ligase">
    <location>
        <begin position="1"/>
        <end position="447"/>
    </location>
</feature>
<feature type="binding site" evidence="1">
    <location>
        <begin position="108"/>
        <end position="114"/>
    </location>
    <ligand>
        <name>ATP</name>
        <dbReference type="ChEBI" id="CHEBI:30616"/>
    </ligand>
</feature>
<organism>
    <name type="scientific">Listeria monocytogenes serotype 4b (strain F2365)</name>
    <dbReference type="NCBI Taxonomy" id="265669"/>
    <lineage>
        <taxon>Bacteria</taxon>
        <taxon>Bacillati</taxon>
        <taxon>Bacillota</taxon>
        <taxon>Bacilli</taxon>
        <taxon>Bacillales</taxon>
        <taxon>Listeriaceae</taxon>
        <taxon>Listeria</taxon>
    </lineage>
</organism>